<name>BPT_METS4</name>
<dbReference type="EC" id="2.3.2.29" evidence="1"/>
<dbReference type="EMBL" id="CP000943">
    <property type="protein sequence ID" value="ACA21083.1"/>
    <property type="molecule type" value="Genomic_DNA"/>
</dbReference>
<dbReference type="RefSeq" id="WP_012336457.1">
    <property type="nucleotide sequence ID" value="NC_010511.1"/>
</dbReference>
<dbReference type="SMR" id="B0UJ71"/>
<dbReference type="STRING" id="426117.M446_6838"/>
<dbReference type="KEGG" id="met:M446_6838"/>
<dbReference type="eggNOG" id="COG2935">
    <property type="taxonomic scope" value="Bacteria"/>
</dbReference>
<dbReference type="HOGENOM" id="CLU_077607_1_0_5"/>
<dbReference type="GO" id="GO:0005737">
    <property type="term" value="C:cytoplasm"/>
    <property type="evidence" value="ECO:0007669"/>
    <property type="project" value="UniProtKB-SubCell"/>
</dbReference>
<dbReference type="GO" id="GO:0004057">
    <property type="term" value="F:arginyl-tRNA--protein transferase activity"/>
    <property type="evidence" value="ECO:0007669"/>
    <property type="project" value="InterPro"/>
</dbReference>
<dbReference type="GO" id="GO:0008914">
    <property type="term" value="F:leucyl-tRNA--protein transferase activity"/>
    <property type="evidence" value="ECO:0007669"/>
    <property type="project" value="UniProtKB-UniRule"/>
</dbReference>
<dbReference type="GO" id="GO:0071596">
    <property type="term" value="P:ubiquitin-dependent protein catabolic process via the N-end rule pathway"/>
    <property type="evidence" value="ECO:0007669"/>
    <property type="project" value="InterPro"/>
</dbReference>
<dbReference type="HAMAP" id="MF_00689">
    <property type="entry name" value="Bpt"/>
    <property type="match status" value="1"/>
</dbReference>
<dbReference type="InterPro" id="IPR016181">
    <property type="entry name" value="Acyl_CoA_acyltransferase"/>
</dbReference>
<dbReference type="InterPro" id="IPR017138">
    <property type="entry name" value="Asp_Glu_LeuTrfase"/>
</dbReference>
<dbReference type="InterPro" id="IPR030700">
    <property type="entry name" value="N-end_Aminoacyl_Trfase"/>
</dbReference>
<dbReference type="InterPro" id="IPR007472">
    <property type="entry name" value="N-end_Aminoacyl_Trfase_C"/>
</dbReference>
<dbReference type="InterPro" id="IPR007471">
    <property type="entry name" value="N-end_Aminoacyl_Trfase_N"/>
</dbReference>
<dbReference type="NCBIfam" id="NF002342">
    <property type="entry name" value="PRK01305.1-3"/>
    <property type="match status" value="1"/>
</dbReference>
<dbReference type="NCBIfam" id="NF002343">
    <property type="entry name" value="PRK01305.1-4"/>
    <property type="match status" value="1"/>
</dbReference>
<dbReference type="NCBIfam" id="NF002346">
    <property type="entry name" value="PRK01305.2-3"/>
    <property type="match status" value="1"/>
</dbReference>
<dbReference type="PANTHER" id="PTHR21367">
    <property type="entry name" value="ARGININE-TRNA-PROTEIN TRANSFERASE 1"/>
    <property type="match status" value="1"/>
</dbReference>
<dbReference type="PANTHER" id="PTHR21367:SF1">
    <property type="entry name" value="ARGINYL-TRNA--PROTEIN TRANSFERASE 1"/>
    <property type="match status" value="1"/>
</dbReference>
<dbReference type="Pfam" id="PF04377">
    <property type="entry name" value="ATE_C"/>
    <property type="match status" value="1"/>
</dbReference>
<dbReference type="Pfam" id="PF04376">
    <property type="entry name" value="ATE_N"/>
    <property type="match status" value="1"/>
</dbReference>
<dbReference type="PIRSF" id="PIRSF037208">
    <property type="entry name" value="ATE_pro_prd"/>
    <property type="match status" value="1"/>
</dbReference>
<dbReference type="SUPFAM" id="SSF55729">
    <property type="entry name" value="Acyl-CoA N-acyltransferases (Nat)"/>
    <property type="match status" value="1"/>
</dbReference>
<keyword id="KW-0012">Acyltransferase</keyword>
<keyword id="KW-0963">Cytoplasm</keyword>
<keyword id="KW-0808">Transferase</keyword>
<feature type="chain" id="PRO_1000131986" description="Aspartate/glutamate leucyltransferase">
    <location>
        <begin position="1"/>
        <end position="248"/>
    </location>
</feature>
<protein>
    <recommendedName>
        <fullName evidence="1">Aspartate/glutamate leucyltransferase</fullName>
        <ecNumber evidence="1">2.3.2.29</ecNumber>
    </recommendedName>
</protein>
<reference key="1">
    <citation type="submission" date="2008-02" db="EMBL/GenBank/DDBJ databases">
        <title>Complete sequence of chromosome of Methylobacterium sp. 4-46.</title>
        <authorList>
            <consortium name="US DOE Joint Genome Institute"/>
            <person name="Copeland A."/>
            <person name="Lucas S."/>
            <person name="Lapidus A."/>
            <person name="Glavina del Rio T."/>
            <person name="Dalin E."/>
            <person name="Tice H."/>
            <person name="Bruce D."/>
            <person name="Goodwin L."/>
            <person name="Pitluck S."/>
            <person name="Chertkov O."/>
            <person name="Brettin T."/>
            <person name="Detter J.C."/>
            <person name="Han C."/>
            <person name="Kuske C.R."/>
            <person name="Schmutz J."/>
            <person name="Larimer F."/>
            <person name="Land M."/>
            <person name="Hauser L."/>
            <person name="Kyrpides N."/>
            <person name="Ivanova N."/>
            <person name="Marx C.J."/>
            <person name="Richardson P."/>
        </authorList>
    </citation>
    <scope>NUCLEOTIDE SEQUENCE [LARGE SCALE GENOMIC DNA]</scope>
    <source>
        <strain>4-46</strain>
    </source>
</reference>
<organism>
    <name type="scientific">Methylobacterium sp. (strain 4-46)</name>
    <dbReference type="NCBI Taxonomy" id="426117"/>
    <lineage>
        <taxon>Bacteria</taxon>
        <taxon>Pseudomonadati</taxon>
        <taxon>Pseudomonadota</taxon>
        <taxon>Alphaproteobacteria</taxon>
        <taxon>Hyphomicrobiales</taxon>
        <taxon>Methylobacteriaceae</taxon>
        <taxon>Methylobacterium</taxon>
    </lineage>
</organism>
<sequence length="248" mass="28055">MTSHPRDAPQFYLTAPSPCPYLPGQHERKVFTHLVGRRARDLNEILTQGGFRRSQTIAYRPACETCRACVSVRVVVGDFEPSASQRRVLKRNRDLVGQPQPNRPASEQYALFRRYLDARHGDGGMVDMTVLDYAMMVEDSHVETHLVVYRKRGPDTAINGRGVGAPIAVCLTDVLSDGLSMVYSFYEPSEADRSLGTFMILDHIERARLLGLPYLYLGYWVEGSRKMDYKAKFGPQERLMPQGWARVG</sequence>
<proteinExistence type="inferred from homology"/>
<accession>B0UJ71</accession>
<evidence type="ECO:0000255" key="1">
    <source>
        <dbReference type="HAMAP-Rule" id="MF_00689"/>
    </source>
</evidence>
<gene>
    <name evidence="1" type="primary">bpt</name>
    <name type="ordered locus">M446_6838</name>
</gene>
<comment type="function">
    <text evidence="1">Functions in the N-end rule pathway of protein degradation where it conjugates Leu from its aminoacyl-tRNA to the N-termini of proteins containing an N-terminal aspartate or glutamate.</text>
</comment>
<comment type="catalytic activity">
    <reaction evidence="1">
        <text>N-terminal L-glutamyl-[protein] + L-leucyl-tRNA(Leu) = N-terminal L-leucyl-L-glutamyl-[protein] + tRNA(Leu) + H(+)</text>
        <dbReference type="Rhea" id="RHEA:50412"/>
        <dbReference type="Rhea" id="RHEA-COMP:9613"/>
        <dbReference type="Rhea" id="RHEA-COMP:9622"/>
        <dbReference type="Rhea" id="RHEA-COMP:12664"/>
        <dbReference type="Rhea" id="RHEA-COMP:12668"/>
        <dbReference type="ChEBI" id="CHEBI:15378"/>
        <dbReference type="ChEBI" id="CHEBI:64721"/>
        <dbReference type="ChEBI" id="CHEBI:78442"/>
        <dbReference type="ChEBI" id="CHEBI:78494"/>
        <dbReference type="ChEBI" id="CHEBI:133041"/>
        <dbReference type="EC" id="2.3.2.29"/>
    </reaction>
</comment>
<comment type="catalytic activity">
    <reaction evidence="1">
        <text>N-terminal L-aspartyl-[protein] + L-leucyl-tRNA(Leu) = N-terminal L-leucyl-L-aspartyl-[protein] + tRNA(Leu) + H(+)</text>
        <dbReference type="Rhea" id="RHEA:50420"/>
        <dbReference type="Rhea" id="RHEA-COMP:9613"/>
        <dbReference type="Rhea" id="RHEA-COMP:9622"/>
        <dbReference type="Rhea" id="RHEA-COMP:12669"/>
        <dbReference type="Rhea" id="RHEA-COMP:12674"/>
        <dbReference type="ChEBI" id="CHEBI:15378"/>
        <dbReference type="ChEBI" id="CHEBI:64720"/>
        <dbReference type="ChEBI" id="CHEBI:78442"/>
        <dbReference type="ChEBI" id="CHEBI:78494"/>
        <dbReference type="ChEBI" id="CHEBI:133042"/>
        <dbReference type="EC" id="2.3.2.29"/>
    </reaction>
</comment>
<comment type="subcellular location">
    <subcellularLocation>
        <location evidence="1">Cytoplasm</location>
    </subcellularLocation>
</comment>
<comment type="similarity">
    <text evidence="1">Belongs to the R-transferase family. Bpt subfamily.</text>
</comment>